<name>ILVD_SALTY</name>
<feature type="chain" id="PRO_0000103502" description="Dihydroxy-acid dehydratase">
    <location>
        <begin position="1"/>
        <end position="616"/>
    </location>
</feature>
<feature type="active site" description="Proton acceptor" evidence="1">
    <location>
        <position position="517"/>
    </location>
</feature>
<feature type="binding site" evidence="1">
    <location>
        <position position="81"/>
    </location>
    <ligand>
        <name>Mg(2+)</name>
        <dbReference type="ChEBI" id="CHEBI:18420"/>
    </ligand>
</feature>
<feature type="binding site" evidence="1">
    <location>
        <position position="122"/>
    </location>
    <ligand>
        <name>[2Fe-2S] cluster</name>
        <dbReference type="ChEBI" id="CHEBI:190135"/>
    </ligand>
</feature>
<feature type="binding site" evidence="1">
    <location>
        <position position="123"/>
    </location>
    <ligand>
        <name>Mg(2+)</name>
        <dbReference type="ChEBI" id="CHEBI:18420"/>
    </ligand>
</feature>
<feature type="binding site" description="via carbamate group" evidence="1">
    <location>
        <position position="124"/>
    </location>
    <ligand>
        <name>Mg(2+)</name>
        <dbReference type="ChEBI" id="CHEBI:18420"/>
    </ligand>
</feature>
<feature type="binding site" evidence="1">
    <location>
        <position position="195"/>
    </location>
    <ligand>
        <name>[2Fe-2S] cluster</name>
        <dbReference type="ChEBI" id="CHEBI:190135"/>
    </ligand>
</feature>
<feature type="binding site" evidence="1">
    <location>
        <position position="491"/>
    </location>
    <ligand>
        <name>Mg(2+)</name>
        <dbReference type="ChEBI" id="CHEBI:18420"/>
    </ligand>
</feature>
<feature type="modified residue" description="N6-carboxylysine" evidence="1">
    <location>
        <position position="124"/>
    </location>
</feature>
<sequence>MPKYRSATTTHGRNMAGARALWRATGMTDSDFGKPIIAVVNSFTQFVPGHVHLRDLGKLVAEQIEASGGVAKEFNTIAVDDGIAMGHGGMLYSLPSRELIADSVEYMVNAHCADAMVCISNCDKITPGMLMASLRLNIPVIFVSGGPMEAGKTKLSDKIIKLDLVDAMIQGADPKVSDDQSNQVERSACPTCGSCSGMFTANSMNCLTEALGLSQPGNGSLLATHADRKQLFLNAGKRIVELTKRYYEQNDESALPRNIASKAAFENAMTLDIAMGGSTNTVLHLLAAAQEAEIDFTMSDIDKLSRKVPQLCKVAPSTQKYHMEDVHRAGGVLGILGELDRAGLLNRNVKNVLGLTLPQTLEQYDITVTQDEAVKKMFRAGPAGIRTTQAFSQDCRWDSLDDDRAAGCIRSLEYAYSKDGGLAVLYGNFAENGCIVKTAGVDDSILKFTGPAKVYESQDDAVEAILGGKVVEGDVVVIRYEGPKGGPGMQEMLYPTSFLKSMGLGKACALITDGRFSGGTSGLSIGHVSPEAASGGTIALIEDGDTIAIDIPNRSIQLQLSEAEIAARREAQEARGDKAWTPKNRQRQVSFALRAYASLATSADKGAVRDKSKLGG</sequence>
<accession>P40810</accession>
<accession>Q9L6S9</accession>
<dbReference type="EC" id="4.2.1.9" evidence="1"/>
<dbReference type="EMBL" id="AF233324">
    <property type="protein sequence ID" value="AAF33480.1"/>
    <property type="molecule type" value="Genomic_DNA"/>
</dbReference>
<dbReference type="EMBL" id="AE006468">
    <property type="protein sequence ID" value="AAL22754.1"/>
    <property type="molecule type" value="Genomic_DNA"/>
</dbReference>
<dbReference type="EMBL" id="M25498">
    <property type="status" value="NOT_ANNOTATED_CDS"/>
    <property type="molecule type" value="Genomic_DNA"/>
</dbReference>
<dbReference type="RefSeq" id="NP_462795.1">
    <property type="nucleotide sequence ID" value="NC_003197.2"/>
</dbReference>
<dbReference type="RefSeq" id="WP_001127434.1">
    <property type="nucleotide sequence ID" value="NC_003197.2"/>
</dbReference>
<dbReference type="SMR" id="P40810"/>
<dbReference type="STRING" id="99287.STM3904"/>
<dbReference type="PaxDb" id="99287-STM3904"/>
<dbReference type="GeneID" id="1255430"/>
<dbReference type="KEGG" id="stm:STM3904"/>
<dbReference type="PATRIC" id="fig|99287.12.peg.4126"/>
<dbReference type="HOGENOM" id="CLU_014271_4_2_6"/>
<dbReference type="OMA" id="STQGRNM"/>
<dbReference type="PhylomeDB" id="P40810"/>
<dbReference type="BioCyc" id="SENT99287:STM3904-MONOMER"/>
<dbReference type="UniPathway" id="UPA00047">
    <property type="reaction ID" value="UER00057"/>
</dbReference>
<dbReference type="UniPathway" id="UPA00049">
    <property type="reaction ID" value="UER00061"/>
</dbReference>
<dbReference type="Proteomes" id="UP000001014">
    <property type="component" value="Chromosome"/>
</dbReference>
<dbReference type="GO" id="GO:0005829">
    <property type="term" value="C:cytosol"/>
    <property type="evidence" value="ECO:0000318"/>
    <property type="project" value="GO_Central"/>
</dbReference>
<dbReference type="GO" id="GO:0051537">
    <property type="term" value="F:2 iron, 2 sulfur cluster binding"/>
    <property type="evidence" value="ECO:0007669"/>
    <property type="project" value="UniProtKB-UniRule"/>
</dbReference>
<dbReference type="GO" id="GO:0004160">
    <property type="term" value="F:dihydroxy-acid dehydratase activity"/>
    <property type="evidence" value="ECO:0007669"/>
    <property type="project" value="UniProtKB-UniRule"/>
</dbReference>
<dbReference type="GO" id="GO:0016836">
    <property type="term" value="F:hydro-lyase activity"/>
    <property type="evidence" value="ECO:0000318"/>
    <property type="project" value="GO_Central"/>
</dbReference>
<dbReference type="GO" id="GO:0000287">
    <property type="term" value="F:magnesium ion binding"/>
    <property type="evidence" value="ECO:0007669"/>
    <property type="project" value="UniProtKB-UniRule"/>
</dbReference>
<dbReference type="GO" id="GO:0009097">
    <property type="term" value="P:isoleucine biosynthetic process"/>
    <property type="evidence" value="ECO:0007669"/>
    <property type="project" value="UniProtKB-UniRule"/>
</dbReference>
<dbReference type="GO" id="GO:0009099">
    <property type="term" value="P:L-valine biosynthetic process"/>
    <property type="evidence" value="ECO:0007669"/>
    <property type="project" value="UniProtKB-UniRule"/>
</dbReference>
<dbReference type="FunFam" id="3.50.30.80:FF:000001">
    <property type="entry name" value="Dihydroxy-acid dehydratase"/>
    <property type="match status" value="1"/>
</dbReference>
<dbReference type="Gene3D" id="3.50.30.80">
    <property type="entry name" value="IlvD/EDD C-terminal domain-like"/>
    <property type="match status" value="1"/>
</dbReference>
<dbReference type="HAMAP" id="MF_00012">
    <property type="entry name" value="IlvD"/>
    <property type="match status" value="1"/>
</dbReference>
<dbReference type="InterPro" id="IPR042096">
    <property type="entry name" value="Dihydro-acid_dehy_C"/>
</dbReference>
<dbReference type="InterPro" id="IPR004404">
    <property type="entry name" value="DihydroxyA_deHydtase"/>
</dbReference>
<dbReference type="InterPro" id="IPR020558">
    <property type="entry name" value="DiOHA_6PGluconate_deHydtase_CS"/>
</dbReference>
<dbReference type="InterPro" id="IPR056740">
    <property type="entry name" value="ILV_EDD_C"/>
</dbReference>
<dbReference type="InterPro" id="IPR000581">
    <property type="entry name" value="ILV_EDD_N"/>
</dbReference>
<dbReference type="InterPro" id="IPR037237">
    <property type="entry name" value="IlvD/EDD_N"/>
</dbReference>
<dbReference type="NCBIfam" id="TIGR00110">
    <property type="entry name" value="ilvD"/>
    <property type="match status" value="1"/>
</dbReference>
<dbReference type="NCBIfam" id="NF009103">
    <property type="entry name" value="PRK12448.1"/>
    <property type="match status" value="1"/>
</dbReference>
<dbReference type="PANTHER" id="PTHR43661">
    <property type="entry name" value="D-XYLONATE DEHYDRATASE"/>
    <property type="match status" value="1"/>
</dbReference>
<dbReference type="PANTHER" id="PTHR43661:SF3">
    <property type="entry name" value="D-XYLONATE DEHYDRATASE YAGF-RELATED"/>
    <property type="match status" value="1"/>
</dbReference>
<dbReference type="Pfam" id="PF24877">
    <property type="entry name" value="ILV_EDD_C"/>
    <property type="match status" value="1"/>
</dbReference>
<dbReference type="Pfam" id="PF00920">
    <property type="entry name" value="ILVD_EDD_N"/>
    <property type="match status" value="1"/>
</dbReference>
<dbReference type="SUPFAM" id="SSF143975">
    <property type="entry name" value="IlvD/EDD N-terminal domain-like"/>
    <property type="match status" value="1"/>
</dbReference>
<dbReference type="SUPFAM" id="SSF52016">
    <property type="entry name" value="LeuD/IlvD-like"/>
    <property type="match status" value="1"/>
</dbReference>
<dbReference type="PROSITE" id="PS00886">
    <property type="entry name" value="ILVD_EDD_1"/>
    <property type="match status" value="1"/>
</dbReference>
<dbReference type="PROSITE" id="PS00887">
    <property type="entry name" value="ILVD_EDD_2"/>
    <property type="match status" value="1"/>
</dbReference>
<organism>
    <name type="scientific">Salmonella typhimurium (strain LT2 / SGSC1412 / ATCC 700720)</name>
    <dbReference type="NCBI Taxonomy" id="99287"/>
    <lineage>
        <taxon>Bacteria</taxon>
        <taxon>Pseudomonadati</taxon>
        <taxon>Pseudomonadota</taxon>
        <taxon>Gammaproteobacteria</taxon>
        <taxon>Enterobacterales</taxon>
        <taxon>Enterobacteriaceae</taxon>
        <taxon>Salmonella</taxon>
    </lineage>
</organism>
<reference key="1">
    <citation type="journal article" date="2001" name="Nature">
        <title>Complete genome sequence of Salmonella enterica serovar Typhimurium LT2.</title>
        <authorList>
            <person name="McClelland M."/>
            <person name="Sanderson K.E."/>
            <person name="Spieth J."/>
            <person name="Clifton S.W."/>
            <person name="Latreille P."/>
            <person name="Courtney L."/>
            <person name="Porwollik S."/>
            <person name="Ali J."/>
            <person name="Dante M."/>
            <person name="Du F."/>
            <person name="Hou S."/>
            <person name="Layman D."/>
            <person name="Leonard S."/>
            <person name="Nguyen C."/>
            <person name="Scott K."/>
            <person name="Holmes A."/>
            <person name="Grewal N."/>
            <person name="Mulvaney E."/>
            <person name="Ryan E."/>
            <person name="Sun H."/>
            <person name="Florea L."/>
            <person name="Miller W."/>
            <person name="Stoneking T."/>
            <person name="Nhan M."/>
            <person name="Waterston R."/>
            <person name="Wilson R.K."/>
        </authorList>
    </citation>
    <scope>NUCLEOTIDE SEQUENCE [LARGE SCALE GENOMIC DNA]</scope>
    <source>
        <strain>LT2 / SGSC1412 / ATCC 700720</strain>
    </source>
</reference>
<reference key="2">
    <citation type="journal article" date="1989" name="Gene">
        <title>Physical identification of an internal promoter, ilvAp, in the distal portion of the ilvGMEDA operon.</title>
        <authorList>
            <person name="Lopes J.M."/>
            <person name="Lawther R.P."/>
        </authorList>
    </citation>
    <scope>NUCLEOTIDE SEQUENCE [GENOMIC DNA] OF 549-616</scope>
    <source>
        <strain>LT2</strain>
    </source>
</reference>
<proteinExistence type="inferred from homology"/>
<protein>
    <recommendedName>
        <fullName evidence="1">Dihydroxy-acid dehydratase</fullName>
        <shortName evidence="1">DAD</shortName>
        <ecNumber evidence="1">4.2.1.9</ecNumber>
    </recommendedName>
</protein>
<comment type="function">
    <text evidence="1">Functions in the biosynthesis of branched-chain amino acids. Catalyzes the dehydration of (2R,3R)-2,3-dihydroxy-3-methylpentanoate (2,3-dihydroxy-3-methylvalerate) into 2-oxo-3-methylpentanoate (2-oxo-3-methylvalerate) and of (2R)-2,3-dihydroxy-3-methylbutanoate (2,3-dihydroxyisovalerate) into 2-oxo-3-methylbutanoate (2-oxoisovalerate), the penultimate precursor to L-isoleucine and L-valine, respectively.</text>
</comment>
<comment type="catalytic activity">
    <reaction evidence="1">
        <text>(2R)-2,3-dihydroxy-3-methylbutanoate = 3-methyl-2-oxobutanoate + H2O</text>
        <dbReference type="Rhea" id="RHEA:24809"/>
        <dbReference type="ChEBI" id="CHEBI:11851"/>
        <dbReference type="ChEBI" id="CHEBI:15377"/>
        <dbReference type="ChEBI" id="CHEBI:49072"/>
        <dbReference type="EC" id="4.2.1.9"/>
    </reaction>
    <physiologicalReaction direction="left-to-right" evidence="1">
        <dbReference type="Rhea" id="RHEA:24810"/>
    </physiologicalReaction>
</comment>
<comment type="catalytic activity">
    <reaction evidence="1">
        <text>(2R,3R)-2,3-dihydroxy-3-methylpentanoate = (S)-3-methyl-2-oxopentanoate + H2O</text>
        <dbReference type="Rhea" id="RHEA:27694"/>
        <dbReference type="ChEBI" id="CHEBI:15377"/>
        <dbReference type="ChEBI" id="CHEBI:35146"/>
        <dbReference type="ChEBI" id="CHEBI:49258"/>
        <dbReference type="EC" id="4.2.1.9"/>
    </reaction>
    <physiologicalReaction direction="left-to-right" evidence="1">
        <dbReference type="Rhea" id="RHEA:27695"/>
    </physiologicalReaction>
</comment>
<comment type="cofactor">
    <cofactor evidence="1">
        <name>[2Fe-2S] cluster</name>
        <dbReference type="ChEBI" id="CHEBI:190135"/>
    </cofactor>
    <text evidence="1">Binds 1 [2Fe-2S] cluster per subunit. This cluster acts as a Lewis acid cofactor.</text>
</comment>
<comment type="cofactor">
    <cofactor evidence="1">
        <name>Mg(2+)</name>
        <dbReference type="ChEBI" id="CHEBI:18420"/>
    </cofactor>
</comment>
<comment type="pathway">
    <text evidence="1">Amino-acid biosynthesis; L-isoleucine biosynthesis; L-isoleucine from 2-oxobutanoate: step 3/4.</text>
</comment>
<comment type="pathway">
    <text evidence="1">Amino-acid biosynthesis; L-valine biosynthesis; L-valine from pyruvate: step 3/4.</text>
</comment>
<comment type="subunit">
    <text evidence="1">Homodimer.</text>
</comment>
<comment type="similarity">
    <text evidence="1">Belongs to the IlvD/Edd family.</text>
</comment>
<keyword id="KW-0001">2Fe-2S</keyword>
<keyword id="KW-0028">Amino-acid biosynthesis</keyword>
<keyword id="KW-0100">Branched-chain amino acid biosynthesis</keyword>
<keyword id="KW-0408">Iron</keyword>
<keyword id="KW-0411">Iron-sulfur</keyword>
<keyword id="KW-0456">Lyase</keyword>
<keyword id="KW-0460">Magnesium</keyword>
<keyword id="KW-0479">Metal-binding</keyword>
<keyword id="KW-1185">Reference proteome</keyword>
<gene>
    <name evidence="1" type="primary">ilvD</name>
    <name type="ordered locus">STM3904</name>
    <name type="ORF">STMD1.88</name>
</gene>
<evidence type="ECO:0000255" key="1">
    <source>
        <dbReference type="HAMAP-Rule" id="MF_00012"/>
    </source>
</evidence>